<dbReference type="EMBL" id="M35027">
    <property type="protein sequence ID" value="AAA48155.1"/>
    <property type="molecule type" value="Genomic_DNA"/>
</dbReference>
<dbReference type="PIR" id="G42524">
    <property type="entry name" value="G42524"/>
</dbReference>
<dbReference type="Proteomes" id="UP000008269">
    <property type="component" value="Segment"/>
</dbReference>
<keyword id="KW-1185">Reference proteome</keyword>
<reference key="1">
    <citation type="journal article" date="1990" name="Virology">
        <title>The complete DNA sequence of vaccinia virus.</title>
        <authorList>
            <person name="Goebel S.J."/>
            <person name="Johnson G.P."/>
            <person name="Perkus M.E."/>
            <person name="Davis S.W."/>
            <person name="Winslow J.P."/>
            <person name="Paoletti E."/>
        </authorList>
    </citation>
    <scope>NUCLEOTIDE SEQUENCE [LARGE SCALE GENOMIC DNA]</scope>
</reference>
<reference key="2">
    <citation type="journal article" date="1990" name="Virology">
        <title>Appendix to 'The complete DNA sequence of vaccinia virus'.</title>
        <authorList>
            <person name="Goebel S.J."/>
            <person name="Johnson G.P."/>
            <person name="Perkus M.E."/>
            <person name="Davis S.W."/>
            <person name="Winslow J.P."/>
            <person name="Paoletti E."/>
        </authorList>
    </citation>
    <scope>COMPLETE GENOME</scope>
</reference>
<organism>
    <name type="scientific">Vaccinia virus (strain Copenhagen)</name>
    <name type="common">VACV</name>
    <dbReference type="NCBI Taxonomy" id="10249"/>
    <lineage>
        <taxon>Viruses</taxon>
        <taxon>Varidnaviria</taxon>
        <taxon>Bamfordvirae</taxon>
        <taxon>Nucleocytoviricota</taxon>
        <taxon>Pokkesviricetes</taxon>
        <taxon>Chitovirales</taxon>
        <taxon>Poxviridae</taxon>
        <taxon>Chordopoxvirinae</taxon>
        <taxon>Orthopoxvirus</taxon>
        <taxon>Vaccinia virus</taxon>
    </lineage>
</organism>
<name>YVAK_VACCC</name>
<organismHost>
    <name type="scientific">Homo sapiens</name>
    <name type="common">Human</name>
    <dbReference type="NCBI Taxonomy" id="9606"/>
</organismHost>
<protein>
    <recommendedName>
        <fullName>Uncharacterized 7.5 kDa protein</fullName>
    </recommendedName>
</protein>
<feature type="chain" id="PRO_0000099652" description="Uncharacterized 7.5 kDa protein">
    <location>
        <begin position="1"/>
        <end position="70"/>
    </location>
</feature>
<proteinExistence type="predicted"/>
<sequence>MVGICSTAVSHSSLTAVDVLDKTIPMFNKGHFTRLLNPCLINVANEGSSSTTIEFSSRGCCMMNDGMLFD</sequence>
<gene>
    <name type="ORF">A ORF K</name>
</gene>
<accession>P20520</accession>